<proteinExistence type="inferred from homology"/>
<name>TAL_KOCRD</name>
<reference key="1">
    <citation type="journal article" date="2008" name="J. Bacteriol.">
        <title>Complete genome sequence of the soil actinomycete Kocuria rhizophila.</title>
        <authorList>
            <person name="Takarada H."/>
            <person name="Sekine M."/>
            <person name="Kosugi H."/>
            <person name="Matsuo Y."/>
            <person name="Fujisawa T."/>
            <person name="Omata S."/>
            <person name="Kishi E."/>
            <person name="Shimizu A."/>
            <person name="Tsukatani N."/>
            <person name="Tanikawa S."/>
            <person name="Fujita N."/>
            <person name="Harayama S."/>
        </authorList>
    </citation>
    <scope>NUCLEOTIDE SEQUENCE [LARGE SCALE GENOMIC DNA]</scope>
    <source>
        <strain>ATCC 9341 / DSM 348 / NBRC 103217 / DC2201</strain>
    </source>
</reference>
<feature type="chain" id="PRO_1000126267" description="Transaldolase">
    <location>
        <begin position="1"/>
        <end position="368"/>
    </location>
</feature>
<feature type="active site" description="Schiff-base intermediate with substrate" evidence="1">
    <location>
        <position position="140"/>
    </location>
</feature>
<dbReference type="EC" id="2.2.1.2" evidence="1"/>
<dbReference type="EMBL" id="AP009152">
    <property type="protein sequence ID" value="BAG29565.1"/>
    <property type="molecule type" value="Genomic_DNA"/>
</dbReference>
<dbReference type="RefSeq" id="WP_012398286.1">
    <property type="nucleotide sequence ID" value="NC_010617.1"/>
</dbReference>
<dbReference type="SMR" id="B2GH92"/>
<dbReference type="STRING" id="378753.KRH_12180"/>
<dbReference type="KEGG" id="krh:KRH_12180"/>
<dbReference type="eggNOG" id="COG0176">
    <property type="taxonomic scope" value="Bacteria"/>
</dbReference>
<dbReference type="HOGENOM" id="CLU_050771_1_0_11"/>
<dbReference type="OrthoDB" id="9809101at2"/>
<dbReference type="UniPathway" id="UPA00115">
    <property type="reaction ID" value="UER00414"/>
</dbReference>
<dbReference type="Proteomes" id="UP000008838">
    <property type="component" value="Chromosome"/>
</dbReference>
<dbReference type="GO" id="GO:0005737">
    <property type="term" value="C:cytoplasm"/>
    <property type="evidence" value="ECO:0007669"/>
    <property type="project" value="UniProtKB-SubCell"/>
</dbReference>
<dbReference type="GO" id="GO:0004801">
    <property type="term" value="F:transaldolase activity"/>
    <property type="evidence" value="ECO:0007669"/>
    <property type="project" value="UniProtKB-UniRule"/>
</dbReference>
<dbReference type="GO" id="GO:0005975">
    <property type="term" value="P:carbohydrate metabolic process"/>
    <property type="evidence" value="ECO:0007669"/>
    <property type="project" value="InterPro"/>
</dbReference>
<dbReference type="GO" id="GO:0006098">
    <property type="term" value="P:pentose-phosphate shunt"/>
    <property type="evidence" value="ECO:0007669"/>
    <property type="project" value="UniProtKB-UniRule"/>
</dbReference>
<dbReference type="CDD" id="cd00955">
    <property type="entry name" value="Transaldolase_like"/>
    <property type="match status" value="1"/>
</dbReference>
<dbReference type="Gene3D" id="3.20.20.70">
    <property type="entry name" value="Aldolase class I"/>
    <property type="match status" value="1"/>
</dbReference>
<dbReference type="HAMAP" id="MF_00493">
    <property type="entry name" value="Transaldolase_2"/>
    <property type="match status" value="1"/>
</dbReference>
<dbReference type="InterPro" id="IPR013785">
    <property type="entry name" value="Aldolase_TIM"/>
</dbReference>
<dbReference type="InterPro" id="IPR001585">
    <property type="entry name" value="TAL/FSA"/>
</dbReference>
<dbReference type="InterPro" id="IPR004732">
    <property type="entry name" value="Transaldolase_2"/>
</dbReference>
<dbReference type="InterPro" id="IPR018225">
    <property type="entry name" value="Transaldolase_AS"/>
</dbReference>
<dbReference type="NCBIfam" id="NF002881">
    <property type="entry name" value="PRK03343.1"/>
    <property type="match status" value="1"/>
</dbReference>
<dbReference type="NCBIfam" id="TIGR00876">
    <property type="entry name" value="tal_mycobact"/>
    <property type="match status" value="1"/>
</dbReference>
<dbReference type="PANTHER" id="PTHR10683">
    <property type="entry name" value="TRANSALDOLASE"/>
    <property type="match status" value="1"/>
</dbReference>
<dbReference type="PANTHER" id="PTHR10683:SF31">
    <property type="entry name" value="TRANSALDOLASE"/>
    <property type="match status" value="1"/>
</dbReference>
<dbReference type="Pfam" id="PF00923">
    <property type="entry name" value="TAL_FSA"/>
    <property type="match status" value="1"/>
</dbReference>
<dbReference type="PIRSF" id="PIRSF036915">
    <property type="entry name" value="Trnald_Bac_Plnt"/>
    <property type="match status" value="1"/>
</dbReference>
<dbReference type="SUPFAM" id="SSF51569">
    <property type="entry name" value="Aldolase"/>
    <property type="match status" value="1"/>
</dbReference>
<dbReference type="PROSITE" id="PS01054">
    <property type="entry name" value="TRANSALDOLASE_1"/>
    <property type="match status" value="1"/>
</dbReference>
<organism>
    <name type="scientific">Kocuria rhizophila (strain ATCC 9341 / DSM 348 / NBRC 103217 / DC2201)</name>
    <dbReference type="NCBI Taxonomy" id="378753"/>
    <lineage>
        <taxon>Bacteria</taxon>
        <taxon>Bacillati</taxon>
        <taxon>Actinomycetota</taxon>
        <taxon>Actinomycetes</taxon>
        <taxon>Micrococcales</taxon>
        <taxon>Micrococcaceae</taxon>
        <taxon>Kocuria</taxon>
    </lineage>
</organism>
<gene>
    <name evidence="1" type="primary">tal</name>
    <name type="ordered locus">KRH_12180</name>
</gene>
<sequence length="368" mass="39513">MTTPTQKLSDAGVSIWLDDLSRQRLTSGNLQKLIDTENVVGVTTNPTIFAAALADGESYREQVAELAAADTSVDDAVFRITTDDVRDACDLFAPIAEATQGVDGRVSIEVDPRLAQDADATSAMAQKLSQTIDRPNALIKIPATEKGLPSIAATVAEGISVNVTLIFSLERYRGVINAYMEGLERALENGKDLSTIHSVASFFVSRVDTEIDKRLDAVGSSEATALKGKAGLANARLAYQVYEQSLDTERWKRLAAAGANPQRPLWASTGVKDPSLPDTLYVTELVAPNTVNTMPEKTLDATFDHAEVTGDTVTGTYEQSAEVLDAIAEQGVSYQEVVAQLETEGLQKFDASWEELLSTVRAALDAAR</sequence>
<evidence type="ECO:0000255" key="1">
    <source>
        <dbReference type="HAMAP-Rule" id="MF_00493"/>
    </source>
</evidence>
<keyword id="KW-0963">Cytoplasm</keyword>
<keyword id="KW-0570">Pentose shunt</keyword>
<keyword id="KW-1185">Reference proteome</keyword>
<keyword id="KW-0704">Schiff base</keyword>
<keyword id="KW-0808">Transferase</keyword>
<comment type="function">
    <text evidence="1">Transaldolase is important for the balance of metabolites in the pentose-phosphate pathway.</text>
</comment>
<comment type="catalytic activity">
    <reaction evidence="1">
        <text>D-sedoheptulose 7-phosphate + D-glyceraldehyde 3-phosphate = D-erythrose 4-phosphate + beta-D-fructose 6-phosphate</text>
        <dbReference type="Rhea" id="RHEA:17053"/>
        <dbReference type="ChEBI" id="CHEBI:16897"/>
        <dbReference type="ChEBI" id="CHEBI:57483"/>
        <dbReference type="ChEBI" id="CHEBI:57634"/>
        <dbReference type="ChEBI" id="CHEBI:59776"/>
        <dbReference type="EC" id="2.2.1.2"/>
    </reaction>
</comment>
<comment type="pathway">
    <text evidence="1">Carbohydrate degradation; pentose phosphate pathway; D-glyceraldehyde 3-phosphate and beta-D-fructose 6-phosphate from D-ribose 5-phosphate and D-xylulose 5-phosphate (non-oxidative stage): step 2/3.</text>
</comment>
<comment type="subcellular location">
    <subcellularLocation>
        <location evidence="1">Cytoplasm</location>
    </subcellularLocation>
</comment>
<comment type="similarity">
    <text evidence="1">Belongs to the transaldolase family. Type 2 subfamily.</text>
</comment>
<accession>B2GH92</accession>
<protein>
    <recommendedName>
        <fullName evidence="1">Transaldolase</fullName>
        <ecNumber evidence="1">2.2.1.2</ecNumber>
    </recommendedName>
</protein>